<comment type="function">
    <text evidence="1">Involved in mitochondrial fission. Acts as an adapter protein required to form mitochondrial fission complexes. Formation of these complexes is required to promote constriction and fission of the mitochondrial compartment at a late step in mitochondrial division (By similarity).</text>
</comment>
<comment type="subcellular location">
    <subcellularLocation>
        <location evidence="1">Mitochondrion outer membrane</location>
        <topology evidence="1">Peripheral membrane protein</topology>
        <orientation evidence="1">Cytoplasmic side</orientation>
    </subcellularLocation>
</comment>
<comment type="similarity">
    <text evidence="4">Belongs to the WD repeat MDV1/CAF4 family.</text>
</comment>
<proteinExistence type="inferred from homology"/>
<gene>
    <name type="primary">MDV1</name>
    <name type="ORF">MGL_0411</name>
</gene>
<organism>
    <name type="scientific">Malassezia globosa (strain ATCC MYA-4612 / CBS 7966)</name>
    <name type="common">Dandruff-associated fungus</name>
    <dbReference type="NCBI Taxonomy" id="425265"/>
    <lineage>
        <taxon>Eukaryota</taxon>
        <taxon>Fungi</taxon>
        <taxon>Dikarya</taxon>
        <taxon>Basidiomycota</taxon>
        <taxon>Ustilaginomycotina</taxon>
        <taxon>Malasseziomycetes</taxon>
        <taxon>Malasseziales</taxon>
        <taxon>Malasseziaceae</taxon>
        <taxon>Malassezia</taxon>
    </lineage>
</organism>
<reference key="1">
    <citation type="journal article" date="2007" name="Proc. Natl. Acad. Sci. U.S.A.">
        <title>Dandruff-associated Malassezia genomes reveal convergent and divergent virulence traits shared with plant and human fungal pathogens.</title>
        <authorList>
            <person name="Xu J."/>
            <person name="Saunders C.W."/>
            <person name="Hu P."/>
            <person name="Grant R.A."/>
            <person name="Boekhout T."/>
            <person name="Kuramae E.E."/>
            <person name="Kronstad J.W."/>
            <person name="DeAngelis Y.M."/>
            <person name="Reeder N.L."/>
            <person name="Johnstone K.R."/>
            <person name="Leland M."/>
            <person name="Fieno A.M."/>
            <person name="Begley W.M."/>
            <person name="Sun Y."/>
            <person name="Lacey M.P."/>
            <person name="Chaudhary T."/>
            <person name="Keough T."/>
            <person name="Chu L."/>
            <person name="Sears R."/>
            <person name="Yuan B."/>
            <person name="Dawson T.L. Jr."/>
        </authorList>
    </citation>
    <scope>NUCLEOTIDE SEQUENCE [LARGE SCALE GENOMIC DNA]</scope>
    <source>
        <strain>ATCC MYA-4612 / CBS 7966</strain>
    </source>
</reference>
<feature type="chain" id="PRO_0000341597" description="Mitochondrial division protein 1">
    <location>
        <begin position="1"/>
        <end position="674"/>
    </location>
</feature>
<feature type="repeat" description="WD 1">
    <location>
        <begin position="329"/>
        <end position="368"/>
    </location>
</feature>
<feature type="repeat" description="WD 2">
    <location>
        <begin position="371"/>
        <end position="408"/>
    </location>
</feature>
<feature type="repeat" description="WD 3">
    <location>
        <begin position="434"/>
        <end position="471"/>
    </location>
</feature>
<feature type="repeat" description="WD 4">
    <location>
        <begin position="519"/>
        <end position="562"/>
    </location>
</feature>
<feature type="repeat" description="WD 5">
    <location>
        <begin position="565"/>
        <end position="604"/>
    </location>
</feature>
<feature type="repeat" description="WD 6">
    <location>
        <begin position="606"/>
        <end position="641"/>
    </location>
</feature>
<feature type="repeat" description="WD 7">
    <location>
        <begin position="645"/>
        <end position="674"/>
    </location>
</feature>
<feature type="region of interest" description="Disordered" evidence="3">
    <location>
        <begin position="1"/>
        <end position="25"/>
    </location>
</feature>
<feature type="coiled-coil region" evidence="2">
    <location>
        <begin position="202"/>
        <end position="260"/>
    </location>
</feature>
<feature type="compositionally biased region" description="Polar residues" evidence="3">
    <location>
        <begin position="1"/>
        <end position="18"/>
    </location>
</feature>
<evidence type="ECO:0000250" key="1"/>
<evidence type="ECO:0000255" key="2"/>
<evidence type="ECO:0000256" key="3">
    <source>
        <dbReference type="SAM" id="MobiDB-lite"/>
    </source>
</evidence>
<evidence type="ECO:0000305" key="4"/>
<accession>A8PTE4</accession>
<name>MDV1_MALGO</name>
<keyword id="KW-0175">Coiled coil</keyword>
<keyword id="KW-0472">Membrane</keyword>
<keyword id="KW-0496">Mitochondrion</keyword>
<keyword id="KW-1000">Mitochondrion outer membrane</keyword>
<keyword id="KW-1185">Reference proteome</keyword>
<keyword id="KW-0677">Repeat</keyword>
<keyword id="KW-0853">WD repeat</keyword>
<sequence length="674" mass="74225">MGSSSANKKHASTSSAPSNDVRAPHADTNRLLNDMAPQLMTPAMMNAMARISLQSTPIATTRDPFPLQRATLLLAPRFSMENPARSLARISSSLLQFSGLSKHSKSGREQQRTPITSMDVGVLEESQRILATADADLDASLDTSLLDDDNDTSDVAAAADAPVSLFRGYKATVPQVSTSKTRRRQLQASENIRRSKHEPHLLSLQELEVQDRDMLAERRNLEIRRALYHAEIVHVDAKIAALEATKASLQQKLLHVREEELELDDERQGVSELLELQRHRRAMPGGRGLDAGTVLPIGAGSSRWRKTPVFLPSEHDDLPHGIAFMSLNLETGPITALDFSEPYGTLISAALEDTVRVWDLSTGEDVGRLRGHTDTVKCLQVEDELCVSGSLDSTLRVWDLRRVDAFETACRARMEGDGQDVPEADDPCIRTLAGHSRGITALAFDHETLVSGAADKTLRQWDLETSQCVLTMDILWAMSNPSTSVDLRVPLESSAPLLDPLHGANQFAGPFSYPQPPYEDGSWEMYTDFVGSVQFWGFALASGSGDGGVRLWDLRTGQAHRTLLGHTAPITCLQFDDTHLISGSLDKTIRVWDLRSGHVLETLHYDYPVTALQFDSRKIIAAAGACAVDVYNRTSEKHSSLIKHGHTAPVERLRYMDRYAVTGGRDSCIKVWSL</sequence>
<dbReference type="EMBL" id="AAYY01000001">
    <property type="protein sequence ID" value="EDP45422.1"/>
    <property type="molecule type" value="Genomic_DNA"/>
</dbReference>
<dbReference type="RefSeq" id="XP_001732636.1">
    <property type="nucleotide sequence ID" value="XM_001732584.1"/>
</dbReference>
<dbReference type="SMR" id="A8PTE4"/>
<dbReference type="STRING" id="425265.A8PTE4"/>
<dbReference type="GeneID" id="5856942"/>
<dbReference type="KEGG" id="mgl:MGL_0411"/>
<dbReference type="VEuPathDB" id="FungiDB:MGL_0411"/>
<dbReference type="InParanoid" id="A8PTE4"/>
<dbReference type="OMA" id="ERLRYMD"/>
<dbReference type="OrthoDB" id="496at2759"/>
<dbReference type="Proteomes" id="UP000008837">
    <property type="component" value="Unassembled WGS sequence"/>
</dbReference>
<dbReference type="GO" id="GO:0005741">
    <property type="term" value="C:mitochondrial outer membrane"/>
    <property type="evidence" value="ECO:0007669"/>
    <property type="project" value="UniProtKB-SubCell"/>
</dbReference>
<dbReference type="GO" id="GO:0005634">
    <property type="term" value="C:nucleus"/>
    <property type="evidence" value="ECO:0007669"/>
    <property type="project" value="TreeGrafter"/>
</dbReference>
<dbReference type="GO" id="GO:1990234">
    <property type="term" value="C:transferase complex"/>
    <property type="evidence" value="ECO:0007669"/>
    <property type="project" value="UniProtKB-ARBA"/>
</dbReference>
<dbReference type="CDD" id="cd00200">
    <property type="entry name" value="WD40"/>
    <property type="match status" value="1"/>
</dbReference>
<dbReference type="Gene3D" id="6.10.280.220">
    <property type="match status" value="1"/>
</dbReference>
<dbReference type="Gene3D" id="2.130.10.10">
    <property type="entry name" value="YVTN repeat-like/Quinoprotein amine dehydrogenase"/>
    <property type="match status" value="2"/>
</dbReference>
<dbReference type="InterPro" id="IPR020472">
    <property type="entry name" value="G-protein_beta_WD-40_rep"/>
</dbReference>
<dbReference type="InterPro" id="IPR015943">
    <property type="entry name" value="WD40/YVTN_repeat-like_dom_sf"/>
</dbReference>
<dbReference type="InterPro" id="IPR019775">
    <property type="entry name" value="WD40_repeat_CS"/>
</dbReference>
<dbReference type="InterPro" id="IPR036322">
    <property type="entry name" value="WD40_repeat_dom_sf"/>
</dbReference>
<dbReference type="InterPro" id="IPR001680">
    <property type="entry name" value="WD40_rpt"/>
</dbReference>
<dbReference type="PANTHER" id="PTHR22847:SF637">
    <property type="entry name" value="WD REPEAT DOMAIN 5B"/>
    <property type="match status" value="1"/>
</dbReference>
<dbReference type="PANTHER" id="PTHR22847">
    <property type="entry name" value="WD40 REPEAT PROTEIN"/>
    <property type="match status" value="1"/>
</dbReference>
<dbReference type="Pfam" id="PF00400">
    <property type="entry name" value="WD40"/>
    <property type="match status" value="5"/>
</dbReference>
<dbReference type="PRINTS" id="PR00320">
    <property type="entry name" value="GPROTEINBRPT"/>
</dbReference>
<dbReference type="SMART" id="SM00320">
    <property type="entry name" value="WD40"/>
    <property type="match status" value="7"/>
</dbReference>
<dbReference type="SUPFAM" id="SSF50978">
    <property type="entry name" value="WD40 repeat-like"/>
    <property type="match status" value="1"/>
</dbReference>
<dbReference type="PROSITE" id="PS00678">
    <property type="entry name" value="WD_REPEATS_1"/>
    <property type="match status" value="3"/>
</dbReference>
<dbReference type="PROSITE" id="PS50082">
    <property type="entry name" value="WD_REPEATS_2"/>
    <property type="match status" value="6"/>
</dbReference>
<dbReference type="PROSITE" id="PS50294">
    <property type="entry name" value="WD_REPEATS_REGION"/>
    <property type="match status" value="1"/>
</dbReference>
<protein>
    <recommendedName>
        <fullName>Mitochondrial division protein 1</fullName>
    </recommendedName>
</protein>